<organism>
    <name type="scientific">Haemophilus influenzae (strain 86-028NP)</name>
    <dbReference type="NCBI Taxonomy" id="281310"/>
    <lineage>
        <taxon>Bacteria</taxon>
        <taxon>Pseudomonadati</taxon>
        <taxon>Pseudomonadota</taxon>
        <taxon>Gammaproteobacteria</taxon>
        <taxon>Pasteurellales</taxon>
        <taxon>Pasteurellaceae</taxon>
        <taxon>Haemophilus</taxon>
    </lineage>
</organism>
<gene>
    <name evidence="1" type="primary">accD</name>
    <name type="ordered locus">NTHI1904</name>
</gene>
<name>ACCD_HAEI8</name>
<keyword id="KW-0067">ATP-binding</keyword>
<keyword id="KW-0963">Cytoplasm</keyword>
<keyword id="KW-0275">Fatty acid biosynthesis</keyword>
<keyword id="KW-0276">Fatty acid metabolism</keyword>
<keyword id="KW-0444">Lipid biosynthesis</keyword>
<keyword id="KW-0443">Lipid metabolism</keyword>
<keyword id="KW-0479">Metal-binding</keyword>
<keyword id="KW-0547">Nucleotide-binding</keyword>
<keyword id="KW-0808">Transferase</keyword>
<keyword id="KW-0862">Zinc</keyword>
<keyword id="KW-0863">Zinc-finger</keyword>
<accession>Q4QJY5</accession>
<comment type="function">
    <text evidence="1">Component of the acetyl coenzyme A carboxylase (ACC) complex. Biotin carboxylase (BC) catalyzes the carboxylation of biotin on its carrier protein (BCCP) and then the CO(2) group is transferred by the transcarboxylase to acetyl-CoA to form malonyl-CoA.</text>
</comment>
<comment type="catalytic activity">
    <reaction evidence="1">
        <text>N(6)-carboxybiotinyl-L-lysyl-[protein] + acetyl-CoA = N(6)-biotinyl-L-lysyl-[protein] + malonyl-CoA</text>
        <dbReference type="Rhea" id="RHEA:54728"/>
        <dbReference type="Rhea" id="RHEA-COMP:10505"/>
        <dbReference type="Rhea" id="RHEA-COMP:10506"/>
        <dbReference type="ChEBI" id="CHEBI:57288"/>
        <dbReference type="ChEBI" id="CHEBI:57384"/>
        <dbReference type="ChEBI" id="CHEBI:83144"/>
        <dbReference type="ChEBI" id="CHEBI:83145"/>
        <dbReference type="EC" id="2.1.3.15"/>
    </reaction>
</comment>
<comment type="cofactor">
    <cofactor evidence="1">
        <name>Zn(2+)</name>
        <dbReference type="ChEBI" id="CHEBI:29105"/>
    </cofactor>
    <text evidence="1">Binds 1 zinc ion per subunit.</text>
</comment>
<comment type="pathway">
    <text evidence="1">Lipid metabolism; malonyl-CoA biosynthesis; malonyl-CoA from acetyl-CoA: step 1/1.</text>
</comment>
<comment type="subunit">
    <text evidence="1">Acetyl-CoA carboxylase is a heterohexamer composed of biotin carboxyl carrier protein (AccB), biotin carboxylase (AccC) and two subunits each of ACCase subunit alpha (AccA) and ACCase subunit beta (AccD).</text>
</comment>
<comment type="subcellular location">
    <subcellularLocation>
        <location evidence="1">Cytoplasm</location>
    </subcellularLocation>
</comment>
<comment type="similarity">
    <text evidence="1">Belongs to the AccD/PCCB family.</text>
</comment>
<protein>
    <recommendedName>
        <fullName evidence="1">Acetyl-coenzyme A carboxylase carboxyl transferase subunit beta</fullName>
        <shortName evidence="1">ACCase subunit beta</shortName>
        <shortName evidence="1">Acetyl-CoA carboxylase carboxyltransferase subunit beta</shortName>
        <ecNumber evidence="1">2.1.3.15</ecNumber>
    </recommendedName>
</protein>
<dbReference type="EC" id="2.1.3.15" evidence="1"/>
<dbReference type="EMBL" id="CP000057">
    <property type="protein sequence ID" value="AAX88662.1"/>
    <property type="molecule type" value="Genomic_DNA"/>
</dbReference>
<dbReference type="RefSeq" id="WP_005694317.1">
    <property type="nucleotide sequence ID" value="NC_007146.2"/>
</dbReference>
<dbReference type="SMR" id="Q4QJY5"/>
<dbReference type="GeneID" id="93220608"/>
<dbReference type="KEGG" id="hit:NTHI1904"/>
<dbReference type="HOGENOM" id="CLU_015486_1_0_6"/>
<dbReference type="UniPathway" id="UPA00655">
    <property type="reaction ID" value="UER00711"/>
</dbReference>
<dbReference type="Proteomes" id="UP000002525">
    <property type="component" value="Chromosome"/>
</dbReference>
<dbReference type="GO" id="GO:0009329">
    <property type="term" value="C:acetate CoA-transferase complex"/>
    <property type="evidence" value="ECO:0007669"/>
    <property type="project" value="TreeGrafter"/>
</dbReference>
<dbReference type="GO" id="GO:0003989">
    <property type="term" value="F:acetyl-CoA carboxylase activity"/>
    <property type="evidence" value="ECO:0007669"/>
    <property type="project" value="InterPro"/>
</dbReference>
<dbReference type="GO" id="GO:0005524">
    <property type="term" value="F:ATP binding"/>
    <property type="evidence" value="ECO:0007669"/>
    <property type="project" value="UniProtKB-KW"/>
</dbReference>
<dbReference type="GO" id="GO:0016743">
    <property type="term" value="F:carboxyl- or carbamoyltransferase activity"/>
    <property type="evidence" value="ECO:0007669"/>
    <property type="project" value="UniProtKB-UniRule"/>
</dbReference>
<dbReference type="GO" id="GO:0008270">
    <property type="term" value="F:zinc ion binding"/>
    <property type="evidence" value="ECO:0007669"/>
    <property type="project" value="UniProtKB-UniRule"/>
</dbReference>
<dbReference type="GO" id="GO:0006633">
    <property type="term" value="P:fatty acid biosynthetic process"/>
    <property type="evidence" value="ECO:0007669"/>
    <property type="project" value="UniProtKB-KW"/>
</dbReference>
<dbReference type="GO" id="GO:2001295">
    <property type="term" value="P:malonyl-CoA biosynthetic process"/>
    <property type="evidence" value="ECO:0007669"/>
    <property type="project" value="UniProtKB-UniRule"/>
</dbReference>
<dbReference type="Gene3D" id="3.90.226.10">
    <property type="entry name" value="2-enoyl-CoA Hydratase, Chain A, domain 1"/>
    <property type="match status" value="1"/>
</dbReference>
<dbReference type="HAMAP" id="MF_01395">
    <property type="entry name" value="AcetylCoA_CT_beta"/>
    <property type="match status" value="1"/>
</dbReference>
<dbReference type="InterPro" id="IPR034733">
    <property type="entry name" value="AcCoA_carboxyl_beta"/>
</dbReference>
<dbReference type="InterPro" id="IPR000438">
    <property type="entry name" value="Acetyl_CoA_COase_Trfase_b_su"/>
</dbReference>
<dbReference type="InterPro" id="IPR029045">
    <property type="entry name" value="ClpP/crotonase-like_dom_sf"/>
</dbReference>
<dbReference type="InterPro" id="IPR011762">
    <property type="entry name" value="COA_CT_N"/>
</dbReference>
<dbReference type="InterPro" id="IPR041010">
    <property type="entry name" value="Znf-ACC"/>
</dbReference>
<dbReference type="NCBIfam" id="TIGR00515">
    <property type="entry name" value="accD"/>
    <property type="match status" value="1"/>
</dbReference>
<dbReference type="PANTHER" id="PTHR42995">
    <property type="entry name" value="ACETYL-COENZYME A CARBOXYLASE CARBOXYL TRANSFERASE SUBUNIT BETA, CHLOROPLASTIC"/>
    <property type="match status" value="1"/>
</dbReference>
<dbReference type="PANTHER" id="PTHR42995:SF5">
    <property type="entry name" value="ACETYL-COENZYME A CARBOXYLASE CARBOXYL TRANSFERASE SUBUNIT BETA, CHLOROPLASTIC"/>
    <property type="match status" value="1"/>
</dbReference>
<dbReference type="Pfam" id="PF01039">
    <property type="entry name" value="Carboxyl_trans"/>
    <property type="match status" value="1"/>
</dbReference>
<dbReference type="Pfam" id="PF17848">
    <property type="entry name" value="Zn_ribbon_ACC"/>
    <property type="match status" value="1"/>
</dbReference>
<dbReference type="PRINTS" id="PR01070">
    <property type="entry name" value="ACCCTRFRASEB"/>
</dbReference>
<dbReference type="SUPFAM" id="SSF52096">
    <property type="entry name" value="ClpP/crotonase"/>
    <property type="match status" value="1"/>
</dbReference>
<dbReference type="PROSITE" id="PS50980">
    <property type="entry name" value="COA_CT_NTER"/>
    <property type="match status" value="1"/>
</dbReference>
<reference key="1">
    <citation type="journal article" date="2005" name="J. Bacteriol.">
        <title>Genomic sequence of an otitis media isolate of nontypeable Haemophilus influenzae: comparative study with H. influenzae serotype d, strain KW20.</title>
        <authorList>
            <person name="Harrison A."/>
            <person name="Dyer D.W."/>
            <person name="Gillaspy A."/>
            <person name="Ray W.C."/>
            <person name="Mungur R."/>
            <person name="Carson M.B."/>
            <person name="Zhong H."/>
            <person name="Gipson J."/>
            <person name="Gipson M."/>
            <person name="Johnson L.S."/>
            <person name="Lewis L."/>
            <person name="Bakaletz L.O."/>
            <person name="Munson R.S. Jr."/>
        </authorList>
    </citation>
    <scope>NUCLEOTIDE SEQUENCE [LARGE SCALE GENOMIC DNA]</scope>
    <source>
        <strain>86-028NP</strain>
    </source>
</reference>
<sequence>MSWINRIFSKSPSSSTRKANVPEGVWTKCTACEQVLYSEELKRNLYVCPKCGHHMRIDARERLLNLLDEDSSQEIAADLEPKDILKFKDLKKYKDRINAAQKETGEKDALITMTGTLYNMPIVVAASNFAFMGGSMGSVVGAKFVKAAEKAMEMNCPFVCFSASGGARMQEALFSLMQMAKTSAVLAQMREKGVPFISVLTDPTLGGVSASFAMLGDLNIAEPKALIGFAGPRVIEQTVREKLPEGFQRSEFLLEKGAIDMIVKRSEMRQTLASVLSKLTNQPSPFVEPELISEDE</sequence>
<feature type="chain" id="PRO_0000358997" description="Acetyl-coenzyme A carboxylase carboxyl transferase subunit beta">
    <location>
        <begin position="1"/>
        <end position="296"/>
    </location>
</feature>
<feature type="domain" description="CoA carboxyltransferase N-terminal" evidence="2">
    <location>
        <begin position="25"/>
        <end position="294"/>
    </location>
</feature>
<feature type="zinc finger region" description="C4-type" evidence="1">
    <location>
        <begin position="29"/>
        <end position="51"/>
    </location>
</feature>
<feature type="binding site" evidence="1">
    <location>
        <position position="29"/>
    </location>
    <ligand>
        <name>Zn(2+)</name>
        <dbReference type="ChEBI" id="CHEBI:29105"/>
    </ligand>
</feature>
<feature type="binding site" evidence="1">
    <location>
        <position position="32"/>
    </location>
    <ligand>
        <name>Zn(2+)</name>
        <dbReference type="ChEBI" id="CHEBI:29105"/>
    </ligand>
</feature>
<feature type="binding site" evidence="1">
    <location>
        <position position="48"/>
    </location>
    <ligand>
        <name>Zn(2+)</name>
        <dbReference type="ChEBI" id="CHEBI:29105"/>
    </ligand>
</feature>
<feature type="binding site" evidence="1">
    <location>
        <position position="51"/>
    </location>
    <ligand>
        <name>Zn(2+)</name>
        <dbReference type="ChEBI" id="CHEBI:29105"/>
    </ligand>
</feature>
<proteinExistence type="inferred from homology"/>
<evidence type="ECO:0000255" key="1">
    <source>
        <dbReference type="HAMAP-Rule" id="MF_01395"/>
    </source>
</evidence>
<evidence type="ECO:0000255" key="2">
    <source>
        <dbReference type="PROSITE-ProRule" id="PRU01136"/>
    </source>
</evidence>